<proteinExistence type="evidence at protein level"/>
<feature type="chain" id="PRO_0000190261" description="5,10-methylenetetrahydrofolate reductase">
    <location>
        <begin position="1"/>
        <end position="296"/>
    </location>
</feature>
<feature type="active site" description="Proton donor/acceptor" evidence="13 15">
    <location>
        <position position="28"/>
    </location>
</feature>
<feature type="binding site" evidence="4 18">
    <location>
        <position position="59"/>
    </location>
    <ligand>
        <name>NADH</name>
        <dbReference type="ChEBI" id="CHEBI:57945"/>
    </ligand>
</feature>
<feature type="binding site" evidence="4 6 18 19 20">
    <location>
        <position position="60"/>
    </location>
    <ligand>
        <name>FAD</name>
        <dbReference type="ChEBI" id="CHEBI:57692"/>
    </ligand>
</feature>
<feature type="binding site" evidence="6 19 20">
    <location>
        <position position="62"/>
    </location>
    <ligand>
        <name>FAD</name>
        <dbReference type="ChEBI" id="CHEBI:57692"/>
    </ligand>
</feature>
<feature type="binding site" evidence="4 6 18 19 20">
    <location>
        <position position="88"/>
    </location>
    <ligand>
        <name>FAD</name>
        <dbReference type="ChEBI" id="CHEBI:57692"/>
    </ligand>
</feature>
<feature type="binding site" evidence="4 6 18 19 20">
    <location>
        <position position="118"/>
    </location>
    <ligand>
        <name>FAD</name>
        <dbReference type="ChEBI" id="CHEBI:57692"/>
    </ligand>
</feature>
<feature type="binding site" evidence="4 6 18 19 20">
    <location>
        <position position="119"/>
    </location>
    <ligand>
        <name>FAD</name>
        <dbReference type="ChEBI" id="CHEBI:57692"/>
    </ligand>
</feature>
<feature type="binding site" evidence="4 6 17 20">
    <location>
        <position position="120"/>
    </location>
    <ligand>
        <name>(6S)-5-methyl-5,6,7,8-tetrahydrofolate</name>
        <dbReference type="ChEBI" id="CHEBI:18608"/>
    </ligand>
</feature>
<feature type="binding site" evidence="6 19 20">
    <location>
        <position position="120"/>
    </location>
    <ligand>
        <name>FAD</name>
        <dbReference type="ChEBI" id="CHEBI:57692"/>
    </ligand>
</feature>
<feature type="binding site" evidence="4 6 18 19 20">
    <location>
        <position position="132"/>
    </location>
    <ligand>
        <name>FAD</name>
        <dbReference type="ChEBI" id="CHEBI:57692"/>
    </ligand>
</feature>
<feature type="binding site" evidence="4 6 18 19 20">
    <location>
        <position position="152"/>
    </location>
    <ligand>
        <name>FAD</name>
        <dbReference type="ChEBI" id="CHEBI:57692"/>
    </ligand>
</feature>
<feature type="binding site" evidence="4 6 18 19 20">
    <location>
        <position position="156"/>
    </location>
    <ligand>
        <name>FAD</name>
        <dbReference type="ChEBI" id="CHEBI:57692"/>
    </ligand>
</feature>
<feature type="binding site" evidence="4 18">
    <location>
        <position position="159"/>
    </location>
    <ligand>
        <name>FAD</name>
        <dbReference type="ChEBI" id="CHEBI:57692"/>
    </ligand>
</feature>
<feature type="binding site" evidence="4 6 18 19">
    <location>
        <position position="165"/>
    </location>
    <ligand>
        <name>FAD</name>
        <dbReference type="ChEBI" id="CHEBI:57692"/>
    </ligand>
</feature>
<feature type="binding site" evidence="4 6 18 19 20">
    <location>
        <position position="168"/>
    </location>
    <ligand>
        <name>FAD</name>
        <dbReference type="ChEBI" id="CHEBI:57692"/>
    </ligand>
</feature>
<feature type="binding site" evidence="4 6 18 19 20">
    <location>
        <position position="171"/>
    </location>
    <ligand>
        <name>FAD</name>
        <dbReference type="ChEBI" id="CHEBI:57692"/>
    </ligand>
</feature>
<feature type="binding site" evidence="4 6 18 19 20">
    <location>
        <position position="172"/>
    </location>
    <ligand>
        <name>FAD</name>
        <dbReference type="ChEBI" id="CHEBI:57692"/>
    </ligand>
</feature>
<feature type="binding site" evidence="4 6 17 20">
    <location>
        <position position="183"/>
    </location>
    <ligand>
        <name>(6S)-5-methyl-5,6,7,8-tetrahydrofolate</name>
        <dbReference type="ChEBI" id="CHEBI:18608"/>
    </ligand>
</feature>
<feature type="binding site" evidence="4 18">
    <location>
        <position position="183"/>
    </location>
    <ligand>
        <name>NADH</name>
        <dbReference type="ChEBI" id="CHEBI:57945"/>
    </ligand>
</feature>
<feature type="binding site" evidence="4 17">
    <location>
        <position position="219"/>
    </location>
    <ligand>
        <name>(6S)-5-methyl-5,6,7,8-tetrahydrofolate</name>
        <dbReference type="ChEBI" id="CHEBI:18608"/>
    </ligand>
</feature>
<feature type="binding site" evidence="4 6 20">
    <location>
        <position position="279"/>
    </location>
    <ligand>
        <name>(6S)-5-methyl-5,6,7,8-tetrahydrofolate</name>
        <dbReference type="ChEBI" id="CHEBI:18608"/>
    </ligand>
</feature>
<feature type="mutagenesis site" description="Abolishes enzyme activity." evidence="2 4">
    <original>E</original>
    <variation>Q</variation>
    <location>
        <position position="28"/>
    </location>
</feature>
<feature type="mutagenesis site" description="Strongly reduces enzyme activity. Strongly reduces affinity for 5-methyltetrahydrofolate." evidence="2">
    <original>D</original>
    <variation>N</variation>
    <location>
        <position position="120"/>
    </location>
</feature>
<feature type="mutagenesis site" description="Increases the propensity to lose its essential flavin cofactor." evidence="1">
    <original>A</original>
    <variation>V</variation>
    <location>
        <position position="177"/>
    </location>
</feature>
<feature type="mutagenesis site" description="Strongly decreases substrate and NADH binding." evidence="6">
    <original>F</original>
    <variation>A</variation>
    <location>
        <position position="223"/>
    </location>
</feature>
<feature type="mutagenesis site" description="Slightly reduced enzyme activity." evidence="6">
    <original>F</original>
    <variation>L</variation>
    <location>
        <position position="223"/>
    </location>
</feature>
<feature type="helix" evidence="22">
    <location>
        <begin position="4"/>
        <end position="17"/>
    </location>
</feature>
<feature type="turn" evidence="22">
    <location>
        <begin position="18"/>
        <end position="21"/>
    </location>
</feature>
<feature type="strand" evidence="22">
    <location>
        <begin position="24"/>
        <end position="29"/>
    </location>
</feature>
<feature type="helix" evidence="22">
    <location>
        <begin position="35"/>
        <end position="49"/>
    </location>
</feature>
<feature type="strand" evidence="22">
    <location>
        <begin position="54"/>
        <end position="58"/>
    </location>
</feature>
<feature type="helix" evidence="22">
    <location>
        <begin position="67"/>
        <end position="81"/>
    </location>
</feature>
<feature type="strand" evidence="22">
    <location>
        <begin position="85"/>
        <end position="91"/>
    </location>
</feature>
<feature type="helix" evidence="22">
    <location>
        <begin position="96"/>
        <end position="108"/>
    </location>
</feature>
<feature type="strand" evidence="22">
    <location>
        <begin position="113"/>
        <end position="117"/>
    </location>
</feature>
<feature type="strand" evidence="21">
    <location>
        <begin position="123"/>
        <end position="125"/>
    </location>
</feature>
<feature type="helix" evidence="22">
    <location>
        <begin position="132"/>
        <end position="142"/>
    </location>
</feature>
<feature type="strand" evidence="22">
    <location>
        <begin position="146"/>
        <end position="151"/>
    </location>
</feature>
<feature type="helix" evidence="22">
    <location>
        <begin position="162"/>
        <end position="175"/>
    </location>
</feature>
<feature type="strand" evidence="22">
    <location>
        <begin position="179"/>
        <end position="182"/>
    </location>
</feature>
<feature type="helix" evidence="22">
    <location>
        <begin position="188"/>
        <end position="200"/>
    </location>
</feature>
<feature type="strand" evidence="21">
    <location>
        <begin position="207"/>
        <end position="211"/>
    </location>
</feature>
<feature type="helix" evidence="22">
    <location>
        <begin position="217"/>
        <end position="226"/>
    </location>
</feature>
<feature type="helix" evidence="22">
    <location>
        <begin position="233"/>
        <end position="239"/>
    </location>
</feature>
<feature type="helix" evidence="22">
    <location>
        <begin position="246"/>
        <end position="266"/>
    </location>
</feature>
<feature type="strand" evidence="22">
    <location>
        <begin position="271"/>
        <end position="275"/>
    </location>
</feature>
<feature type="helix" evidence="22">
    <location>
        <begin position="281"/>
        <end position="289"/>
    </location>
</feature>
<keyword id="KW-0002">3D-structure</keyword>
<keyword id="KW-0028">Amino-acid biosynthesis</keyword>
<keyword id="KW-0274">FAD</keyword>
<keyword id="KW-0285">Flavoprotein</keyword>
<keyword id="KW-0486">Methionine biosynthesis</keyword>
<keyword id="KW-0520">NAD</keyword>
<keyword id="KW-0560">Oxidoreductase</keyword>
<keyword id="KW-1185">Reference proteome</keyword>
<gene>
    <name evidence="10" type="primary">metF</name>
    <name type="ordered locus">b3941</name>
    <name type="ordered locus">JW3913</name>
</gene>
<dbReference type="EC" id="1.5.1.54" evidence="2 6 7 14"/>
<dbReference type="EMBL" id="V01502">
    <property type="protein sequence ID" value="CAA24747.1"/>
    <property type="molecule type" value="Genomic_DNA"/>
</dbReference>
<dbReference type="EMBL" id="L19201">
    <property type="protein sequence ID" value="AAB03073.1"/>
    <property type="molecule type" value="Genomic_DNA"/>
</dbReference>
<dbReference type="EMBL" id="U00096">
    <property type="protein sequence ID" value="AAC76923.1"/>
    <property type="molecule type" value="Genomic_DNA"/>
</dbReference>
<dbReference type="EMBL" id="AP009048">
    <property type="protein sequence ID" value="BAE77369.1"/>
    <property type="molecule type" value="Genomic_DNA"/>
</dbReference>
<dbReference type="PIR" id="A00462">
    <property type="entry name" value="RDECMH"/>
</dbReference>
<dbReference type="RefSeq" id="NP_418376.1">
    <property type="nucleotide sequence ID" value="NC_000913.3"/>
</dbReference>
<dbReference type="RefSeq" id="WP_000007523.1">
    <property type="nucleotide sequence ID" value="NZ_STEB01000037.1"/>
</dbReference>
<dbReference type="PDB" id="1B5T">
    <property type="method" value="X-ray"/>
    <property type="resolution" value="2.50 A"/>
    <property type="chains" value="A/B/C=21-294"/>
</dbReference>
<dbReference type="PDB" id="1ZP3">
    <property type="method" value="X-ray"/>
    <property type="resolution" value="1.85 A"/>
    <property type="chains" value="A/B/C=1-296"/>
</dbReference>
<dbReference type="PDB" id="1ZP4">
    <property type="method" value="X-ray"/>
    <property type="resolution" value="1.85 A"/>
    <property type="chains" value="A/B/C=1-296"/>
</dbReference>
<dbReference type="PDB" id="1ZPT">
    <property type="method" value="X-ray"/>
    <property type="resolution" value="1.95 A"/>
    <property type="chains" value="A/B/C=1-296"/>
</dbReference>
<dbReference type="PDB" id="1ZRQ">
    <property type="method" value="X-ray"/>
    <property type="resolution" value="2.20 A"/>
    <property type="chains" value="A/B/C=1-296"/>
</dbReference>
<dbReference type="PDB" id="2FMN">
    <property type="method" value="X-ray"/>
    <property type="resolution" value="2.05 A"/>
    <property type="chains" value="A/B/C=1-296"/>
</dbReference>
<dbReference type="PDB" id="2FMO">
    <property type="method" value="X-ray"/>
    <property type="resolution" value="2.25 A"/>
    <property type="chains" value="A/B/C=1-296"/>
</dbReference>
<dbReference type="PDB" id="3FST">
    <property type="method" value="X-ray"/>
    <property type="resolution" value="1.65 A"/>
    <property type="chains" value="A/C/E=1-296"/>
</dbReference>
<dbReference type="PDB" id="3FSU">
    <property type="method" value="X-ray"/>
    <property type="resolution" value="1.70 A"/>
    <property type="chains" value="A/C/E=1-296"/>
</dbReference>
<dbReference type="PDB" id="6PEY">
    <property type="method" value="X-ray"/>
    <property type="resolution" value="2.88 A"/>
    <property type="chains" value="A/B/C=1-296"/>
</dbReference>
<dbReference type="PDBsum" id="1B5T"/>
<dbReference type="PDBsum" id="1ZP3"/>
<dbReference type="PDBsum" id="1ZP4"/>
<dbReference type="PDBsum" id="1ZPT"/>
<dbReference type="PDBsum" id="1ZRQ"/>
<dbReference type="PDBsum" id="2FMN"/>
<dbReference type="PDBsum" id="2FMO"/>
<dbReference type="PDBsum" id="3FST"/>
<dbReference type="PDBsum" id="3FSU"/>
<dbReference type="PDBsum" id="6PEY"/>
<dbReference type="SMR" id="P0AEZ1"/>
<dbReference type="BioGRID" id="4263063">
    <property type="interactions" value="29"/>
</dbReference>
<dbReference type="DIP" id="DIP-6848N"/>
<dbReference type="FunCoup" id="P0AEZ1">
    <property type="interactions" value="449"/>
</dbReference>
<dbReference type="IntAct" id="P0AEZ1">
    <property type="interactions" value="4"/>
</dbReference>
<dbReference type="STRING" id="511145.b3941"/>
<dbReference type="DrugBank" id="DB03147">
    <property type="generic name" value="Flavin adenine dinucleotide"/>
</dbReference>
<dbReference type="PaxDb" id="511145-b3941"/>
<dbReference type="EnsemblBacteria" id="AAC76923">
    <property type="protein sequence ID" value="AAC76923"/>
    <property type="gene ID" value="b3941"/>
</dbReference>
<dbReference type="GeneID" id="93777951"/>
<dbReference type="GeneID" id="948432"/>
<dbReference type="KEGG" id="ecj:JW3913"/>
<dbReference type="KEGG" id="eco:b3941"/>
<dbReference type="KEGG" id="ecoc:C3026_21300"/>
<dbReference type="PATRIC" id="fig|1411691.4.peg.2763"/>
<dbReference type="EchoBASE" id="EB0580"/>
<dbReference type="eggNOG" id="COG0685">
    <property type="taxonomic scope" value="Bacteria"/>
</dbReference>
<dbReference type="HOGENOM" id="CLU_025841_0_0_6"/>
<dbReference type="InParanoid" id="P0AEZ1"/>
<dbReference type="OMA" id="EMHPQAR"/>
<dbReference type="OrthoDB" id="9812555at2"/>
<dbReference type="PhylomeDB" id="P0AEZ1"/>
<dbReference type="BioCyc" id="EcoCyc:METHYLENETHFREDUCT-MONOMER"/>
<dbReference type="BioCyc" id="MetaCyc:METHYLENETHFREDUCT-MONOMER"/>
<dbReference type="BRENDA" id="1.5.1.20">
    <property type="organism ID" value="2026"/>
</dbReference>
<dbReference type="BRENDA" id="1.5.1.54">
    <property type="organism ID" value="2026"/>
</dbReference>
<dbReference type="SABIO-RK" id="P0AEZ1"/>
<dbReference type="UniPathway" id="UPA00051"/>
<dbReference type="UniPathway" id="UPA00193"/>
<dbReference type="EvolutionaryTrace" id="P0AEZ1"/>
<dbReference type="PRO" id="PR:P0AEZ1"/>
<dbReference type="Proteomes" id="UP000000625">
    <property type="component" value="Chromosome"/>
</dbReference>
<dbReference type="GO" id="GO:0005829">
    <property type="term" value="C:cytosol"/>
    <property type="evidence" value="ECO:0007669"/>
    <property type="project" value="InterPro"/>
</dbReference>
<dbReference type="GO" id="GO:0032991">
    <property type="term" value="C:protein-containing complex"/>
    <property type="evidence" value="ECO:0000314"/>
    <property type="project" value="EcoCyc"/>
</dbReference>
<dbReference type="GO" id="GO:0071949">
    <property type="term" value="F:FAD binding"/>
    <property type="evidence" value="ECO:0000314"/>
    <property type="project" value="EcoCyc"/>
</dbReference>
<dbReference type="GO" id="GO:0004489">
    <property type="term" value="F:methylenetetrahydrofolate reductase (NAD(P)H) activity"/>
    <property type="evidence" value="ECO:0000314"/>
    <property type="project" value="EcoCyc"/>
</dbReference>
<dbReference type="GO" id="GO:0106312">
    <property type="term" value="F:methylenetetrahydrofolate reductase (NADH) activity"/>
    <property type="evidence" value="ECO:0007669"/>
    <property type="project" value="RHEA"/>
</dbReference>
<dbReference type="GO" id="GO:0051087">
    <property type="term" value="F:protein-folding chaperone binding"/>
    <property type="evidence" value="ECO:0000353"/>
    <property type="project" value="EcoCyc"/>
</dbReference>
<dbReference type="GO" id="GO:0009086">
    <property type="term" value="P:methionine biosynthetic process"/>
    <property type="evidence" value="ECO:0000318"/>
    <property type="project" value="GO_Central"/>
</dbReference>
<dbReference type="GO" id="GO:0035999">
    <property type="term" value="P:tetrahydrofolate interconversion"/>
    <property type="evidence" value="ECO:0000318"/>
    <property type="project" value="GO_Central"/>
</dbReference>
<dbReference type="CDD" id="cd00537">
    <property type="entry name" value="MTHFR"/>
    <property type="match status" value="1"/>
</dbReference>
<dbReference type="FunFam" id="3.20.20.220:FF:000001">
    <property type="entry name" value="Methylenetetrahydrofolate reductase"/>
    <property type="match status" value="1"/>
</dbReference>
<dbReference type="Gene3D" id="3.20.20.220">
    <property type="match status" value="1"/>
</dbReference>
<dbReference type="InterPro" id="IPR029041">
    <property type="entry name" value="FAD-linked_oxidoreductase-like"/>
</dbReference>
<dbReference type="InterPro" id="IPR003171">
    <property type="entry name" value="Mehydrof_redctse-like"/>
</dbReference>
<dbReference type="InterPro" id="IPR004620">
    <property type="entry name" value="MTHF_reductase_bac"/>
</dbReference>
<dbReference type="NCBIfam" id="TIGR00676">
    <property type="entry name" value="fadh2"/>
    <property type="match status" value="1"/>
</dbReference>
<dbReference type="NCBIfam" id="NF006950">
    <property type="entry name" value="PRK09432.1"/>
    <property type="match status" value="1"/>
</dbReference>
<dbReference type="PANTHER" id="PTHR45754">
    <property type="entry name" value="METHYLENETETRAHYDROFOLATE REDUCTASE"/>
    <property type="match status" value="1"/>
</dbReference>
<dbReference type="PANTHER" id="PTHR45754:SF3">
    <property type="entry name" value="METHYLENETETRAHYDROFOLATE REDUCTASE (NADPH)"/>
    <property type="match status" value="1"/>
</dbReference>
<dbReference type="Pfam" id="PF02219">
    <property type="entry name" value="MTHFR"/>
    <property type="match status" value="1"/>
</dbReference>
<dbReference type="SUPFAM" id="SSF51730">
    <property type="entry name" value="FAD-linked oxidoreductase"/>
    <property type="match status" value="1"/>
</dbReference>
<name>METF_ECOLI</name>
<protein>
    <recommendedName>
        <fullName evidence="8 10 11">5,10-methylenetetrahydrofolate reductase</fullName>
        <shortName evidence="8 9">MTHFR</shortName>
        <ecNumber evidence="2 6 7 14">1.5.1.54</ecNumber>
    </recommendedName>
    <alternativeName>
        <fullName evidence="11">NADH-dependent 5,10-methylenetetrahydrofolate reductase</fullName>
    </alternativeName>
</protein>
<reference key="1">
    <citation type="journal article" date="1983" name="Nucleic Acids Res.">
        <title>Nucleotide sequence of metF, the E. coli structural gene for 5-10 methylene tetrahydrofolate reductase and of its control region.</title>
        <authorList>
            <person name="Saint-Girons I."/>
            <person name="Duchange N."/>
            <person name="Zakin M.M."/>
            <person name="Park I."/>
            <person name="Margarita D."/>
            <person name="Ferrara P."/>
            <person name="Cohen G.N."/>
        </authorList>
    </citation>
    <scope>NUCLEOTIDE SEQUENCE [GENOMIC DNA]</scope>
    <source>
        <strain>K12</strain>
    </source>
</reference>
<reference key="2">
    <citation type="journal article" date="1993" name="Nucleic Acids Res.">
        <title>Analysis of the Escherichia coli genome. III. DNA sequence of the region from 87.2 to 89.2 minutes.</title>
        <authorList>
            <person name="Plunkett G. III"/>
            <person name="Burland V."/>
            <person name="Daniels D.L."/>
            <person name="Blattner F.R."/>
        </authorList>
    </citation>
    <scope>NUCLEOTIDE SEQUENCE [LARGE SCALE GENOMIC DNA]</scope>
    <source>
        <strain>K12 / MG1655 / ATCC 47076</strain>
    </source>
</reference>
<reference key="3">
    <citation type="journal article" date="1997" name="Science">
        <title>The complete genome sequence of Escherichia coli K-12.</title>
        <authorList>
            <person name="Blattner F.R."/>
            <person name="Plunkett G. III"/>
            <person name="Bloch C.A."/>
            <person name="Perna N.T."/>
            <person name="Burland V."/>
            <person name="Riley M."/>
            <person name="Collado-Vides J."/>
            <person name="Glasner J.D."/>
            <person name="Rode C.K."/>
            <person name="Mayhew G.F."/>
            <person name="Gregor J."/>
            <person name="Davis N.W."/>
            <person name="Kirkpatrick H.A."/>
            <person name="Goeden M.A."/>
            <person name="Rose D.J."/>
            <person name="Mau B."/>
            <person name="Shao Y."/>
        </authorList>
    </citation>
    <scope>NUCLEOTIDE SEQUENCE [LARGE SCALE GENOMIC DNA]</scope>
    <source>
        <strain>K12 / MG1655 / ATCC 47076</strain>
    </source>
</reference>
<reference key="4">
    <citation type="journal article" date="2006" name="Mol. Syst. Biol.">
        <title>Highly accurate genome sequences of Escherichia coli K-12 strains MG1655 and W3110.</title>
        <authorList>
            <person name="Hayashi K."/>
            <person name="Morooka N."/>
            <person name="Yamamoto Y."/>
            <person name="Fujita K."/>
            <person name="Isono K."/>
            <person name="Choi S."/>
            <person name="Ohtsubo E."/>
            <person name="Baba T."/>
            <person name="Wanner B.L."/>
            <person name="Mori H."/>
            <person name="Horiuchi T."/>
        </authorList>
    </citation>
    <scope>NUCLEOTIDE SEQUENCE [LARGE SCALE GENOMIC DNA]</scope>
    <source>
        <strain>K12 / W3110 / ATCC 27325 / DSM 5911</strain>
    </source>
</reference>
<reference key="5">
    <citation type="journal article" date="1965" name="J. Biol. Chem.">
        <title>Enzymatic synthesis of the methyl group of methionine. 8. Repression-derepression, purification, and properties of 5,10-methylenetetrahydrofolate reductase from Escherichia coli.</title>
        <authorList>
            <person name="Katzen H.M."/>
            <person name="Buchanan J.M."/>
        </authorList>
    </citation>
    <scope>INDUCTION</scope>
    <scope>FUNCTION</scope>
    <scope>CATALYTIC ACTIVITY</scope>
    <scope>BIOPHYSICOCHEMICAL PROPERTIES</scope>
    <scope>COFACTOR</scope>
    <scope>PATHWAY</scope>
</reference>
<reference key="6">
    <citation type="journal article" date="1982" name="Mol. Gen. Genet.">
        <title>Construction and physical mapping of plasmids containing the metJBLF gene cluster of E. coli K12.</title>
        <authorList>
            <person name="Zakin M.M."/>
            <person name="Greene R.C."/>
            <person name="Dautry-Varsat A."/>
            <person name="Duchange N."/>
            <person name="Ferrara P."/>
            <person name="Py M.C."/>
            <person name="Margarita D."/>
            <person name="Cohen G.N."/>
        </authorList>
    </citation>
    <scope>IDENTIFICATION</scope>
</reference>
<reference key="7">
    <citation type="journal article" date="1999" name="J. Bacteriol.">
        <title>Purification and properties of NADH-dependent 5,10-methylenetetrahydrofolate reductase (MetF) from Escherichia coli.</title>
        <authorList>
            <person name="Sheppard C.A."/>
            <person name="Trimmer E.E."/>
            <person name="Matthews R.G."/>
        </authorList>
    </citation>
    <scope>FUNCTION</scope>
    <scope>CATALYTIC ACTIVITY</scope>
    <scope>BIOPHYSICOCHEMICAL PROPERTIES</scope>
    <scope>COFACTOR</scope>
    <scope>SUBSTRATE SPECIFICITY</scope>
    <scope>SUBUNIT</scope>
</reference>
<reference key="8">
    <citation type="journal article" date="2001" name="Biochemistry">
        <title>Folate activation and catalysis in methylenetetrahydrofolate reductase from Escherichia coli: roles for aspartate 120 and glutamate 28.</title>
        <authorList>
            <person name="Trimmer E.E."/>
            <person name="Ballou D.P."/>
            <person name="Ludwig M.L."/>
            <person name="Matthews R.G."/>
        </authorList>
    </citation>
    <scope>CATALYTIC ACTIVITY</scope>
    <scope>COFACTOR</scope>
    <scope>ACTIVE SITE</scope>
    <scope>MUTAGENESIS OF GLU-28 AND ASP-120</scope>
</reference>
<reference key="9">
    <citation type="journal article" date="1999" name="Nat. Struct. Biol.">
        <title>The structure and properties of methylenetetrahydrofolate reductase from Escherichia coli suggest how folate ameliorates human hyperhomocysteinemia.</title>
        <authorList>
            <person name="Guenther B.D."/>
            <person name="Sheppard C.A."/>
            <person name="Tran P."/>
            <person name="Rozen R."/>
            <person name="Matthews R.G."/>
            <person name="Ludwig M.L."/>
        </authorList>
    </citation>
    <scope>X-RAY CRYSTALLOGRAPHY (2.5 ANGSTROMS) OF 21-294 IN COMPLEX WITH FAD</scope>
    <scope>BIOPHYSICOCHEMICAL PROPERTIES</scope>
    <scope>COFACTOR</scope>
    <scope>SUBUNIT</scope>
    <scope>MUTAGENESIS OF ALA-177</scope>
</reference>
<reference evidence="17 18" key="10">
    <citation type="journal article" date="2005" name="Biochemistry">
        <title>Structures of NADH and CH3-H4folate complexes of Escherichia coli methylenetetrahydrofolate reductase reveal a spartan strategy for a ping-pong reaction.</title>
        <authorList>
            <person name="Pejchal R."/>
            <person name="Sargeant R."/>
            <person name="Ludwig M.L."/>
        </authorList>
    </citation>
    <scope>X-RAY CRYSTALLOGRAPHY (1.85 ANGSTROMS) OF WILD TYPE AND MUTANT GLN-28 IN COMPLEXES WITH 5-METHYL-5,6,7,8-TETRAHYDROFOLATE; FAD AND NADH</scope>
    <scope>COFACTOR</scope>
    <scope>SUBUNIT</scope>
    <scope>MUTAGENESIS OF GLU-28</scope>
    <scope>ACTIVE SITE</scope>
</reference>
<reference key="11">
    <citation type="journal article" date="2006" name="Biochemistry">
        <title>Structural perturbations in the Ala --&gt; Val polymorphism of methylenetetrahydrofolate reductase: how binding of folates may protect against inactivation.</title>
        <authorList>
            <person name="Pejchal R."/>
            <person name="Campbell E."/>
            <person name="Guenther B.D."/>
            <person name="Lennon B.W."/>
            <person name="Matthews R.G."/>
            <person name="Ludwig M.L."/>
        </authorList>
    </citation>
    <scope>X-RAY CRYSTALLOGRAPHY (2.05 ANGSTROMS) OF MUTANT VAL-177 IN COMPLEX WITH SUBSTRATE ANALOG LY309887 AND FAD</scope>
    <scope>COFACTOR</scope>
    <scope>SUBUNIT</scope>
</reference>
<reference evidence="19 20" key="12">
    <citation type="journal article" date="2009" name="Biochemistry">
        <title>Functional role for the conformationally mobile phenylalanine 223 in the reaction of methylenetetrahydrofolate reductase from Escherichia coli.</title>
        <authorList>
            <person name="Lee M.N."/>
            <person name="Takawira D."/>
            <person name="Nikolova A.P."/>
            <person name="Ballou D.P."/>
            <person name="Furtado V.C."/>
            <person name="Phung N.L."/>
            <person name="Still B.R."/>
            <person name="Thorstad M.K."/>
            <person name="Tanner J.J."/>
            <person name="Trimmer E.E."/>
        </authorList>
    </citation>
    <scope>X-RAY CRYSTALLOGRAPHY (1.65 ANGSTROMS) OF MUTANTS GLN-28 AND LEU-223 IN COMPLEXES WITH 5-METHYL-5,6,7,8-TETRAHYDROFOLATE AND FAD</scope>
    <scope>CATALYTIC ACTIVITY</scope>
    <scope>MUTAGENESIS OF PHE-223</scope>
    <scope>COFACTOR</scope>
</reference>
<comment type="function">
    <text evidence="3 7">Catalyzes the NADH-dependent reduction of 5,10-methylenetetrahydrofolate to 5-methyltetrahydrofolate (PubMed:9922232). Is required to provide the methyl group necessary for methionine synthetase to convert homocysteine to methionine; the methyl group is given by 5-methyltetrahydrofolate. Can also use NADPH as the reductant, but much less effectively than NADH (PubMed:9922232).</text>
</comment>
<comment type="catalytic activity">
    <reaction evidence="2 6 7 14">
        <text>(6S)-5-methyl-5,6,7,8-tetrahydrofolate + NAD(+) = (6R)-5,10-methylene-5,6,7,8-tetrahydrofolate + NADH + H(+)</text>
        <dbReference type="Rhea" id="RHEA:19821"/>
        <dbReference type="ChEBI" id="CHEBI:15378"/>
        <dbReference type="ChEBI" id="CHEBI:15636"/>
        <dbReference type="ChEBI" id="CHEBI:18608"/>
        <dbReference type="ChEBI" id="CHEBI:57540"/>
        <dbReference type="ChEBI" id="CHEBI:57945"/>
        <dbReference type="EC" id="1.5.1.54"/>
    </reaction>
    <physiologicalReaction direction="right-to-left" evidence="14 16">
        <dbReference type="Rhea" id="RHEA:19823"/>
    </physiologicalReaction>
</comment>
<comment type="cofactor">
    <cofactor evidence="1 2 3 4 5 6 7">
        <name>FAD</name>
        <dbReference type="ChEBI" id="CHEBI:57692"/>
    </cofactor>
</comment>
<comment type="biophysicochemical properties">
    <kinetics>
        <KM evidence="7">13 uM for NADH (at pH 7.2 and 15 degrees Celsius)</KM>
        <KM evidence="7">0.8 uM for (6R)-5,10-methylenetetrahydrofolate (at pH 7.2 and 15 degrees Celsius)</KM>
        <KM evidence="1">17 uM for NADH (at pH 7.2 and 15 degrees Celsius)</KM>
        <KM evidence="1">3.9 uM for 5,10-methylenetetrahydrofolate (at pH 7.2 and 15 degrees Celsius)</KM>
        <text evidence="1 7">kcat is 1800 min(-1) for the NADH-dependent reduction of 5,10-methylenetetrahydrofolate (at pH 7.2 and 15 degrees Celsius) (PubMed:9922232). kcat is 1410 min(-1) for the oxidation of NADH by enzyme-bound FAD (at pH 7.2 and 15 degrees Celsius) (PubMed:10201405).</text>
    </kinetics>
    <phDependence>
        <text evidence="3">Optimum pH is 6.3-6.4.</text>
    </phDependence>
</comment>
<comment type="pathway">
    <text>One-carbon metabolism; tetrahydrofolate interconversion.</text>
</comment>
<comment type="pathway">
    <text evidence="14">Amino-acid biosynthesis; L-methionine biosynthesis via de novo pathway.</text>
</comment>
<comment type="subunit">
    <text evidence="1 4 5 7">Homotetramer.</text>
</comment>
<comment type="induction">
    <text evidence="3">Repressed by methionine.</text>
</comment>
<comment type="miscellaneous">
    <text evidence="4">The reaction proceeds via a ping-pong reaction mechanism, and the two chemically and structurally distinct substrates can therefore occupy overlapping binding sites.</text>
</comment>
<comment type="similarity">
    <text evidence="12">Belongs to the methylenetetrahydrofolate reductase family.</text>
</comment>
<sequence>MSFFHASQRDALNQSLAEVQGQINVSFEFFPPRTSEMEQTLWNSIDRLSSLKPKFVSVTYGANSGERDRTHSIIKGIKDRTGLEAAPHLTCIDATPDELRTIARDYWNNGIRHIVALRGDLPPGSGKPEMYASDLVTLLKEVADFDISVAAYPEVHPEAKSAQADLLNLKRKVDAGANRAITQFFFDVESYLRFRDRCVSAGIDVEIIPGILPVSNFKQAKKFADMTNVRIPAWMAQMFDGLDDDAETRKLVGANIAMDMVKILSREGVKDFHFYTLNRAEMSYAICHTLGVRPGL</sequence>
<organism>
    <name type="scientific">Escherichia coli (strain K12)</name>
    <dbReference type="NCBI Taxonomy" id="83333"/>
    <lineage>
        <taxon>Bacteria</taxon>
        <taxon>Pseudomonadati</taxon>
        <taxon>Pseudomonadota</taxon>
        <taxon>Gammaproteobacteria</taxon>
        <taxon>Enterobacterales</taxon>
        <taxon>Enterobacteriaceae</taxon>
        <taxon>Escherichia</taxon>
    </lineage>
</organism>
<evidence type="ECO:0000269" key="1">
    <source>
    </source>
</evidence>
<evidence type="ECO:0000269" key="2">
    <source>
    </source>
</evidence>
<evidence type="ECO:0000269" key="3">
    <source>
    </source>
</evidence>
<evidence type="ECO:0000269" key="4">
    <source>
    </source>
</evidence>
<evidence type="ECO:0000269" key="5">
    <source>
    </source>
</evidence>
<evidence type="ECO:0000269" key="6">
    <source>
    </source>
</evidence>
<evidence type="ECO:0000269" key="7">
    <source>
    </source>
</evidence>
<evidence type="ECO:0000303" key="8">
    <source>
    </source>
</evidence>
<evidence type="ECO:0000303" key="9">
    <source>
    </source>
</evidence>
<evidence type="ECO:0000303" key="10">
    <source>
    </source>
</evidence>
<evidence type="ECO:0000303" key="11">
    <source>
    </source>
</evidence>
<evidence type="ECO:0000305" key="12"/>
<evidence type="ECO:0000305" key="13">
    <source>
    </source>
</evidence>
<evidence type="ECO:0000305" key="14">
    <source>
    </source>
</evidence>
<evidence type="ECO:0000305" key="15">
    <source>
    </source>
</evidence>
<evidence type="ECO:0000305" key="16">
    <source>
    </source>
</evidence>
<evidence type="ECO:0007744" key="17">
    <source>
        <dbReference type="PDB" id="1ZP4"/>
    </source>
</evidence>
<evidence type="ECO:0007744" key="18">
    <source>
        <dbReference type="PDB" id="1ZPT"/>
    </source>
</evidence>
<evidence type="ECO:0007744" key="19">
    <source>
        <dbReference type="PDB" id="3FST"/>
    </source>
</evidence>
<evidence type="ECO:0007744" key="20">
    <source>
        <dbReference type="PDB" id="3FSU"/>
    </source>
</evidence>
<evidence type="ECO:0007829" key="21">
    <source>
        <dbReference type="PDB" id="1B5T"/>
    </source>
</evidence>
<evidence type="ECO:0007829" key="22">
    <source>
        <dbReference type="PDB" id="3FST"/>
    </source>
</evidence>
<accession>P0AEZ1</accession>
<accession>P00394</accession>
<accession>Q2M8N7</accession>